<gene>
    <name evidence="2" type="primary">aes</name>
    <name type="synonym">ybaC</name>
    <name type="ordered locus">SSON_0463</name>
</gene>
<organism>
    <name type="scientific">Shigella sonnei (strain Ss046)</name>
    <dbReference type="NCBI Taxonomy" id="300269"/>
    <lineage>
        <taxon>Bacteria</taxon>
        <taxon>Pseudomonadati</taxon>
        <taxon>Pseudomonadota</taxon>
        <taxon>Gammaproteobacteria</taxon>
        <taxon>Enterobacterales</taxon>
        <taxon>Enterobacteriaceae</taxon>
        <taxon>Shigella</taxon>
    </lineage>
</organism>
<reference key="1">
    <citation type="journal article" date="2005" name="Nucleic Acids Res.">
        <title>Genome dynamics and diversity of Shigella species, the etiologic agents of bacillary dysentery.</title>
        <authorList>
            <person name="Yang F."/>
            <person name="Yang J."/>
            <person name="Zhang X."/>
            <person name="Chen L."/>
            <person name="Jiang Y."/>
            <person name="Yan Y."/>
            <person name="Tang X."/>
            <person name="Wang J."/>
            <person name="Xiong Z."/>
            <person name="Dong J."/>
            <person name="Xue Y."/>
            <person name="Zhu Y."/>
            <person name="Xu X."/>
            <person name="Sun L."/>
            <person name="Chen S."/>
            <person name="Nie H."/>
            <person name="Peng J."/>
            <person name="Xu J."/>
            <person name="Wang Y."/>
            <person name="Yuan Z."/>
            <person name="Wen Y."/>
            <person name="Yao Z."/>
            <person name="Shen Y."/>
            <person name="Qiang B."/>
            <person name="Hou Y."/>
            <person name="Yu J."/>
            <person name="Jin Q."/>
        </authorList>
    </citation>
    <scope>NUCLEOTIDE SEQUENCE [LARGE SCALE GENOMIC DNA]</scope>
    <source>
        <strain>Ss046</strain>
    </source>
</reference>
<accession>Q3Z4S3</accession>
<evidence type="ECO:0000250" key="1">
    <source>
        <dbReference type="UniProtKB" id="Q5NUF3"/>
    </source>
</evidence>
<evidence type="ECO:0000255" key="2">
    <source>
        <dbReference type="HAMAP-Rule" id="MF_01958"/>
    </source>
</evidence>
<proteinExistence type="inferred from homology"/>
<name>AES_SHISS</name>
<sequence length="319" mass="36038">MKPENKLPVLDLISAEMKTVVNTLQPDLPSWPATGTIAEQRQYYTLERRFWNAGAPEMATRAYMVPTKYGQVETRLFCPQPDSPATLFYLHGGGFILGNLDTHDRIMRLLASYSQCTVIGIDYTLSPEARFPQAIEEIVAACCYFHQQAEDYQINMSRIGFAGDSAGAMLALASALWLRDKQIDCGKIAGVLLWYGLYGLRDSVTRRLLGGVWDGLTQQDLQMYEEAYLSNDADRESPYYCLFNNDLTREVPPCFIAGAEFDPLLDDSRLLYQTLAAHQQPCEFKLYPGTLHAFLHYSRMMKTADEALRDGAQFFTAQL</sequence>
<keyword id="KW-0963">Cytoplasm</keyword>
<keyword id="KW-0378">Hydrolase</keyword>
<keyword id="KW-1185">Reference proteome</keyword>
<keyword id="KW-0719">Serine esterase</keyword>
<comment type="function">
    <text evidence="2">Displays esterase activity towards short chain fatty esters (acyl chain length of up to 8 carbons). Able to hydrolyze triacetylglycerol (triacetin) and tributyrylglycerol (tributyrin), but not trioleylglycerol (triolein) or cholesterol oleate. Negatively regulates MalT activity by antagonizing maltotriose binding. Inhibits MelA galactosidase activity.</text>
</comment>
<comment type="subunit">
    <text evidence="2">Homodimer. Interacts with MalT and MelA.</text>
</comment>
<comment type="subcellular location">
    <subcellularLocation>
        <location evidence="2">Cytoplasm</location>
    </subcellularLocation>
</comment>
<comment type="similarity">
    <text evidence="2">Belongs to the 'GDXG' lipolytic enzyme family.</text>
</comment>
<dbReference type="EC" id="3.1.1.-" evidence="2"/>
<dbReference type="EMBL" id="CP000038">
    <property type="protein sequence ID" value="AAZ87239.1"/>
    <property type="molecule type" value="Genomic_DNA"/>
</dbReference>
<dbReference type="RefSeq" id="WP_000801838.1">
    <property type="nucleotide sequence ID" value="NC_007384.1"/>
</dbReference>
<dbReference type="SMR" id="Q3Z4S3"/>
<dbReference type="ESTHER" id="shifl-AES">
    <property type="family name" value="Acetyl_esterase"/>
</dbReference>
<dbReference type="MEROPS" id="S09.A47"/>
<dbReference type="GeneID" id="93776974"/>
<dbReference type="KEGG" id="ssn:SSON_0463"/>
<dbReference type="HOGENOM" id="CLU_012494_6_4_6"/>
<dbReference type="Proteomes" id="UP000002529">
    <property type="component" value="Chromosome"/>
</dbReference>
<dbReference type="GO" id="GO:0005737">
    <property type="term" value="C:cytoplasm"/>
    <property type="evidence" value="ECO:0007669"/>
    <property type="project" value="UniProtKB-SubCell"/>
</dbReference>
<dbReference type="GO" id="GO:0052689">
    <property type="term" value="F:carboxylic ester hydrolase activity"/>
    <property type="evidence" value="ECO:0007669"/>
    <property type="project" value="UniProtKB-UniRule"/>
</dbReference>
<dbReference type="FunFam" id="3.40.50.1820:FF:000035">
    <property type="entry name" value="Acetyl esterase"/>
    <property type="match status" value="1"/>
</dbReference>
<dbReference type="Gene3D" id="3.40.50.1820">
    <property type="entry name" value="alpha/beta hydrolase"/>
    <property type="match status" value="1"/>
</dbReference>
<dbReference type="HAMAP" id="MF_01958">
    <property type="entry name" value="Acetyl_esterase"/>
    <property type="match status" value="1"/>
</dbReference>
<dbReference type="InterPro" id="IPR013094">
    <property type="entry name" value="AB_hydrolase_3"/>
</dbReference>
<dbReference type="InterPro" id="IPR029058">
    <property type="entry name" value="AB_hydrolase_fold"/>
</dbReference>
<dbReference type="InterPro" id="IPR023508">
    <property type="entry name" value="Acetyl_esterase"/>
</dbReference>
<dbReference type="InterPro" id="IPR050300">
    <property type="entry name" value="GDXG_lipolytic_enzyme"/>
</dbReference>
<dbReference type="InterPro" id="IPR002168">
    <property type="entry name" value="Lipase_GDXG_HIS_AS"/>
</dbReference>
<dbReference type="InterPro" id="IPR033140">
    <property type="entry name" value="Lipase_GDXG_put_SER_AS"/>
</dbReference>
<dbReference type="NCBIfam" id="NF007547">
    <property type="entry name" value="PRK10162.1"/>
    <property type="match status" value="1"/>
</dbReference>
<dbReference type="PANTHER" id="PTHR48081">
    <property type="entry name" value="AB HYDROLASE SUPERFAMILY PROTEIN C4A8.06C"/>
    <property type="match status" value="1"/>
</dbReference>
<dbReference type="PANTHER" id="PTHR48081:SF8">
    <property type="entry name" value="ALPHA_BETA HYDROLASE FOLD-3 DOMAIN-CONTAINING PROTEIN-RELATED"/>
    <property type="match status" value="1"/>
</dbReference>
<dbReference type="Pfam" id="PF07859">
    <property type="entry name" value="Abhydrolase_3"/>
    <property type="match status" value="1"/>
</dbReference>
<dbReference type="SUPFAM" id="SSF53474">
    <property type="entry name" value="alpha/beta-Hydrolases"/>
    <property type="match status" value="1"/>
</dbReference>
<dbReference type="PROSITE" id="PS01173">
    <property type="entry name" value="LIPASE_GDXG_HIS"/>
    <property type="match status" value="1"/>
</dbReference>
<dbReference type="PROSITE" id="PS01174">
    <property type="entry name" value="LIPASE_GDXG_SER"/>
    <property type="match status" value="1"/>
</dbReference>
<protein>
    <recommendedName>
        <fullName evidence="2">Acetyl esterase</fullName>
        <ecNumber evidence="2">3.1.1.-</ecNumber>
    </recommendedName>
</protein>
<feature type="chain" id="PRO_0000239714" description="Acetyl esterase">
    <location>
        <begin position="1"/>
        <end position="319"/>
    </location>
</feature>
<feature type="short sequence motif" description="Involved in the stabilization of the negatively charged intermediate by the formation of the oxyanion hole" evidence="1">
    <location>
        <begin position="91"/>
        <end position="93"/>
    </location>
</feature>
<feature type="active site" evidence="2">
    <location>
        <position position="165"/>
    </location>
</feature>
<feature type="active site" evidence="2">
    <location>
        <position position="262"/>
    </location>
</feature>
<feature type="active site" evidence="2">
    <location>
        <position position="292"/>
    </location>
</feature>